<comment type="function">
    <text evidence="1">This protein is involved in the repair of mismatches in DNA. It is possible that it carries out the mismatch recognition step. This protein has a weak ATPase activity.</text>
</comment>
<comment type="similarity">
    <text evidence="1">Belongs to the DNA mismatch repair MutS family.</text>
</comment>
<protein>
    <recommendedName>
        <fullName evidence="1">DNA mismatch repair protein MutS</fullName>
    </recommendedName>
</protein>
<accession>Q2A5B5</accession>
<dbReference type="EMBL" id="AM233362">
    <property type="protein sequence ID" value="CAJ78735.1"/>
    <property type="molecule type" value="Genomic_DNA"/>
</dbReference>
<dbReference type="RefSeq" id="WP_003014457.1">
    <property type="nucleotide sequence ID" value="NZ_CP009694.1"/>
</dbReference>
<dbReference type="SMR" id="Q2A5B5"/>
<dbReference type="KEGG" id="ftl:FTL_0294"/>
<dbReference type="Proteomes" id="UP000001944">
    <property type="component" value="Chromosome"/>
</dbReference>
<dbReference type="GO" id="GO:0005829">
    <property type="term" value="C:cytosol"/>
    <property type="evidence" value="ECO:0007669"/>
    <property type="project" value="TreeGrafter"/>
</dbReference>
<dbReference type="GO" id="GO:0005524">
    <property type="term" value="F:ATP binding"/>
    <property type="evidence" value="ECO:0007669"/>
    <property type="project" value="UniProtKB-UniRule"/>
</dbReference>
<dbReference type="GO" id="GO:0140664">
    <property type="term" value="F:ATP-dependent DNA damage sensor activity"/>
    <property type="evidence" value="ECO:0007669"/>
    <property type="project" value="InterPro"/>
</dbReference>
<dbReference type="GO" id="GO:0003684">
    <property type="term" value="F:damaged DNA binding"/>
    <property type="evidence" value="ECO:0007669"/>
    <property type="project" value="UniProtKB-UniRule"/>
</dbReference>
<dbReference type="GO" id="GO:0030983">
    <property type="term" value="F:mismatched DNA binding"/>
    <property type="evidence" value="ECO:0007669"/>
    <property type="project" value="InterPro"/>
</dbReference>
<dbReference type="GO" id="GO:0006298">
    <property type="term" value="P:mismatch repair"/>
    <property type="evidence" value="ECO:0007669"/>
    <property type="project" value="UniProtKB-UniRule"/>
</dbReference>
<dbReference type="FunFam" id="1.10.1420.10:FF:000002">
    <property type="entry name" value="DNA mismatch repair protein MutS"/>
    <property type="match status" value="1"/>
</dbReference>
<dbReference type="FunFam" id="3.40.1170.10:FF:000001">
    <property type="entry name" value="DNA mismatch repair protein MutS"/>
    <property type="match status" value="1"/>
</dbReference>
<dbReference type="FunFam" id="3.40.50.300:FF:000870">
    <property type="entry name" value="MutS protein homolog 4"/>
    <property type="match status" value="1"/>
</dbReference>
<dbReference type="Gene3D" id="1.10.1420.10">
    <property type="match status" value="2"/>
</dbReference>
<dbReference type="Gene3D" id="3.40.1170.10">
    <property type="entry name" value="DNA repair protein MutS, domain I"/>
    <property type="match status" value="1"/>
</dbReference>
<dbReference type="Gene3D" id="3.30.420.110">
    <property type="entry name" value="MutS, connector domain"/>
    <property type="match status" value="1"/>
</dbReference>
<dbReference type="Gene3D" id="3.40.50.300">
    <property type="entry name" value="P-loop containing nucleotide triphosphate hydrolases"/>
    <property type="match status" value="1"/>
</dbReference>
<dbReference type="HAMAP" id="MF_00096">
    <property type="entry name" value="MutS"/>
    <property type="match status" value="1"/>
</dbReference>
<dbReference type="InterPro" id="IPR005748">
    <property type="entry name" value="DNA_mismatch_repair_MutS"/>
</dbReference>
<dbReference type="InterPro" id="IPR007695">
    <property type="entry name" value="DNA_mismatch_repair_MutS-lik_N"/>
</dbReference>
<dbReference type="InterPro" id="IPR017261">
    <property type="entry name" value="DNA_mismatch_repair_MutS/MSH"/>
</dbReference>
<dbReference type="InterPro" id="IPR000432">
    <property type="entry name" value="DNA_mismatch_repair_MutS_C"/>
</dbReference>
<dbReference type="InterPro" id="IPR007861">
    <property type="entry name" value="DNA_mismatch_repair_MutS_clamp"/>
</dbReference>
<dbReference type="InterPro" id="IPR007696">
    <property type="entry name" value="DNA_mismatch_repair_MutS_core"/>
</dbReference>
<dbReference type="InterPro" id="IPR016151">
    <property type="entry name" value="DNA_mismatch_repair_MutS_N"/>
</dbReference>
<dbReference type="InterPro" id="IPR036187">
    <property type="entry name" value="DNA_mismatch_repair_MutS_sf"/>
</dbReference>
<dbReference type="InterPro" id="IPR007860">
    <property type="entry name" value="DNA_mmatch_repair_MutS_con_dom"/>
</dbReference>
<dbReference type="InterPro" id="IPR045076">
    <property type="entry name" value="MutS"/>
</dbReference>
<dbReference type="InterPro" id="IPR036678">
    <property type="entry name" value="MutS_con_dom_sf"/>
</dbReference>
<dbReference type="InterPro" id="IPR027417">
    <property type="entry name" value="P-loop_NTPase"/>
</dbReference>
<dbReference type="NCBIfam" id="TIGR01070">
    <property type="entry name" value="mutS1"/>
    <property type="match status" value="1"/>
</dbReference>
<dbReference type="NCBIfam" id="NF003810">
    <property type="entry name" value="PRK05399.1"/>
    <property type="match status" value="1"/>
</dbReference>
<dbReference type="PANTHER" id="PTHR11361:SF34">
    <property type="entry name" value="DNA MISMATCH REPAIR PROTEIN MSH1, MITOCHONDRIAL"/>
    <property type="match status" value="1"/>
</dbReference>
<dbReference type="PANTHER" id="PTHR11361">
    <property type="entry name" value="DNA MISMATCH REPAIR PROTEIN MUTS FAMILY MEMBER"/>
    <property type="match status" value="1"/>
</dbReference>
<dbReference type="Pfam" id="PF01624">
    <property type="entry name" value="MutS_I"/>
    <property type="match status" value="1"/>
</dbReference>
<dbReference type="Pfam" id="PF05188">
    <property type="entry name" value="MutS_II"/>
    <property type="match status" value="1"/>
</dbReference>
<dbReference type="Pfam" id="PF05192">
    <property type="entry name" value="MutS_III"/>
    <property type="match status" value="1"/>
</dbReference>
<dbReference type="Pfam" id="PF05190">
    <property type="entry name" value="MutS_IV"/>
    <property type="match status" value="1"/>
</dbReference>
<dbReference type="Pfam" id="PF00488">
    <property type="entry name" value="MutS_V"/>
    <property type="match status" value="1"/>
</dbReference>
<dbReference type="PIRSF" id="PIRSF037677">
    <property type="entry name" value="DNA_mis_repair_Msh6"/>
    <property type="match status" value="1"/>
</dbReference>
<dbReference type="SMART" id="SM00534">
    <property type="entry name" value="MUTSac"/>
    <property type="match status" value="1"/>
</dbReference>
<dbReference type="SMART" id="SM00533">
    <property type="entry name" value="MUTSd"/>
    <property type="match status" value="1"/>
</dbReference>
<dbReference type="SUPFAM" id="SSF55271">
    <property type="entry name" value="DNA repair protein MutS, domain I"/>
    <property type="match status" value="1"/>
</dbReference>
<dbReference type="SUPFAM" id="SSF53150">
    <property type="entry name" value="DNA repair protein MutS, domain II"/>
    <property type="match status" value="1"/>
</dbReference>
<dbReference type="SUPFAM" id="SSF48334">
    <property type="entry name" value="DNA repair protein MutS, domain III"/>
    <property type="match status" value="1"/>
</dbReference>
<dbReference type="SUPFAM" id="SSF52540">
    <property type="entry name" value="P-loop containing nucleoside triphosphate hydrolases"/>
    <property type="match status" value="1"/>
</dbReference>
<dbReference type="PROSITE" id="PS00486">
    <property type="entry name" value="DNA_MISMATCH_REPAIR_2"/>
    <property type="match status" value="1"/>
</dbReference>
<evidence type="ECO:0000255" key="1">
    <source>
        <dbReference type="HAMAP-Rule" id="MF_00096"/>
    </source>
</evidence>
<name>MUTS_FRATH</name>
<gene>
    <name evidence="1" type="primary">mutS</name>
    <name type="ordered locus">FTL_0294</name>
</gene>
<reference key="1">
    <citation type="submission" date="2006-03" db="EMBL/GenBank/DDBJ databases">
        <title>Complete genome sequence of Francisella tularensis LVS (Live Vaccine Strain).</title>
        <authorList>
            <person name="Chain P."/>
            <person name="Larimer F."/>
            <person name="Land M."/>
            <person name="Stilwagen S."/>
            <person name="Larsson P."/>
            <person name="Bearden S."/>
            <person name="Chu M."/>
            <person name="Oyston P."/>
            <person name="Forsman M."/>
            <person name="Andersson S."/>
            <person name="Lindler L."/>
            <person name="Titball R."/>
            <person name="Garcia E."/>
        </authorList>
    </citation>
    <scope>NUCLEOTIDE SEQUENCE [LARGE SCALE GENOMIC DNA]</scope>
    <source>
        <strain>LVS</strain>
    </source>
</reference>
<proteinExistence type="inferred from homology"/>
<keyword id="KW-0067">ATP-binding</keyword>
<keyword id="KW-0227">DNA damage</keyword>
<keyword id="KW-0234">DNA repair</keyword>
<keyword id="KW-0238">DNA-binding</keyword>
<keyword id="KW-0547">Nucleotide-binding</keyword>
<keyword id="KW-1185">Reference proteome</keyword>
<sequence length="844" mass="95813">MQDISNHTPMIQQYLKIKSQYQDILLFYRMGDFYELFFDDAKKAAELLDITLTARGKSNGESIPMAGVPYHAAEAYIAKIVKKGLSIAICEQTGDPNTSKGPVERQVTRIITPATVSEEAFLDNNQDSILVSIFEKNNKYYLAYTSYTQGKIYLVKTLTSLNELKNTVLKLSPQEIITNSRELAQQNPFKKPIKALEEWYYSNFEAKKYINDSLDTNIANNILNLYKNDQLTTIGSILSYLTNILKDTPRHITDISYEQEQDTLNIDINSRINLELDNNSKSSLLSIIGKCKTSLGSRLLKRYFSNPTRNLNILATRHSIINSLGENQHFLKIQDVLSYISDIERIISRVALGTVKPKDLVALRYSLEQLPILKKLLSEKNTPEITNINNRIHQLDELVTLLDKAIIENPPTTIRDGGVIKEGFDKELDELKSIKDNSYDFLIKFEELQKQKIGISTLKVGYNRVHGYYIELSKQHADKIPTEYVRRQTLKASERYITEELKNFEDKVLSSKEKALAREKLIYDTLLKKVIEYYKQIQETAASIAEIDVLANFAERAIKLKLSQPKFNNLAKLELKEVRHLAIEHNIDEPFIPNDTLLSKDTNTLQIITGPNMGGKSTYMRQVAQLIFLAYIGSFVPASYADICDIDTIYTRIGASDDISSGRSTFMVEMTETAYILNNASAKSLVIMDEIGRGTSTFDGLALAKACAEKFAQMGAFTLFATHYFELTELAKQYPNVCNIHFEAKEYKDNIYFMHKAVTGAAKKSYGIQVAKLAGISQDVLESAKQNLYNLEKKQQLTESTQVQAQFQLEPTTQNPLQQKLDAIDINTITPLEALNILFELKKR</sequence>
<feature type="chain" id="PRO_0000335157" description="DNA mismatch repair protein MutS">
    <location>
        <begin position="1"/>
        <end position="844"/>
    </location>
</feature>
<feature type="binding site" evidence="1">
    <location>
        <begin position="610"/>
        <end position="617"/>
    </location>
    <ligand>
        <name>ATP</name>
        <dbReference type="ChEBI" id="CHEBI:30616"/>
    </ligand>
</feature>
<organism>
    <name type="scientific">Francisella tularensis subsp. holarctica (strain LVS)</name>
    <dbReference type="NCBI Taxonomy" id="376619"/>
    <lineage>
        <taxon>Bacteria</taxon>
        <taxon>Pseudomonadati</taxon>
        <taxon>Pseudomonadota</taxon>
        <taxon>Gammaproteobacteria</taxon>
        <taxon>Thiotrichales</taxon>
        <taxon>Francisellaceae</taxon>
        <taxon>Francisella</taxon>
    </lineage>
</organism>